<protein>
    <recommendedName>
        <fullName>Beta-1,3-galactosyl-O-glycosyl-glycoprotein beta-1,6-N-acetylglucosaminyltransferase 3</fullName>
        <ecNumber evidence="2">2.4.1.102</ecNumber>
        <ecNumber evidence="2">2.4.1.148</ecNumber>
        <ecNumber evidence="2">2.4.1.150</ecNumber>
    </recommendedName>
    <alternativeName>
        <fullName>C2GnT-mucin type</fullName>
        <shortName>C2GnT-M</shortName>
    </alternativeName>
    <alternativeName>
        <fullName>dI/C2/C4GnT</fullName>
        <shortName>dIGnT</shortName>
    </alternativeName>
</protein>
<proteinExistence type="evidence at protein level"/>
<accession>Q8CH87</accession>
<name>GCNT3_RAT</name>
<reference key="1">
    <citation type="journal article" date="2003" name="Glycobiology">
        <title>Purification and cDNA cloning of UDP-GlcNAc:GlcNAcbeta1-3Galbeta1-4Glc(NAc)-R [GlcNAc to Gal]beta1,6N-acetylglucosaminyltransferase from rat small intestine: a major carrier of dIGnT activity in rat small intestine.</title>
        <authorList>
            <person name="Korekane H."/>
            <person name="Taguchi T."/>
            <person name="Sakamoto Y."/>
            <person name="Honke K."/>
            <person name="Dohmae N."/>
            <person name="Salminen H."/>
            <person name="Toivonen S."/>
            <person name="Helin J."/>
            <person name="Takio K."/>
            <person name="Renkonen O."/>
            <person name="Taniguchi N."/>
        </authorList>
    </citation>
    <scope>NUCLEOTIDE SEQUENCE [MRNA]</scope>
    <scope>PROTEIN SEQUENCE OF 118-126; 266-280 AND 313-324</scope>
    <scope>BIOPHYSICOCHEMICAL PROPERTIES</scope>
</reference>
<gene>
    <name type="primary">Gcnt3</name>
</gene>
<sequence length="437" mass="50642">MVSWRRFCWHYHGWTLGCYMLLAIIALKLSLRLKCDFDVMDLDSKEFQSQYCRDLLYKTLELPAKSSINCSGVIRGEQKAVTQALLNNLELKRKRQSFTEADYLSMTADCEHFKTQRKFIQVPLSKEEANFPIAYSMVIHEKIENFERLLRAVYTPQNIYCVHVDQKSSETFQQAVRAIVSCFPNVFIANKLVSVVYASWSRVQADLNCMEDLLQSPVPWEYLLNTCGTDFPIKTNAEMVKALKLLNGQNSMESEVPPPHKTFRWKYHYEVADTLYRTSKEKTPPPNNITMFTGNAYMVASRDFIEHVLSNSKARQLIEWVKDTYSPDEHLWATLQRASWMPGSDPLHPKFDLSDMRSIARLTKWQDHEGDIENGAPYTSCSGIHQRAICVYGSGDLHWILQNHHLLANKFDPKVDDNVLQCLEEYLRHKAIYGTEL</sequence>
<comment type="function">
    <text>Glycosyltransferase that can synthesize all known mucin beta 6 N-acetylglucosaminides. Mediates core 2 and core 4 O-glycan branching, 2 important steps in mucin-type biosynthesis. Also has I-branching enzyme activity by converting linear into branched poly-N-acetyllactosaminoglycans, leading to introduce the blood group I antigen during embryonic development.</text>
</comment>
<comment type="catalytic activity">
    <reaction evidence="2">
        <text>a 3-O-[beta-D-galactosyl-(1-&gt;3)-N-acetyl-alpha-D-galactosaminyl]-L-seryl-[protein] + UDP-N-acetyl-alpha-D-glucosamine = 3-O-{beta-D-galactosyl-(1-&gt;3)-[N-acetyl-beta-D-glucosaminyl-(1-&gt;6)]-N-acetyl-alpha-D-galactosaminyl}-L-seryl-[protein] + UDP + H(+)</text>
        <dbReference type="Rhea" id="RHEA:56212"/>
        <dbReference type="Rhea" id="RHEA-COMP:13922"/>
        <dbReference type="Rhea" id="RHEA-COMP:14419"/>
        <dbReference type="ChEBI" id="CHEBI:15378"/>
        <dbReference type="ChEBI" id="CHEBI:57705"/>
        <dbReference type="ChEBI" id="CHEBI:58223"/>
        <dbReference type="ChEBI" id="CHEBI:137949"/>
        <dbReference type="ChEBI" id="CHEBI:139605"/>
        <dbReference type="EC" id="2.4.1.102"/>
    </reaction>
</comment>
<comment type="catalytic activity">
    <reaction evidence="2">
        <text>a 3-O-[beta-D-galactosyl-(1-&gt;3)-N-acetyl-alpha-D-galactosaminyl]-L-threonyl-[protein] + UDP-N-acetyl-alpha-D-glucosamine = a 3-O-{beta-D-galactosyl-(1-&gt;3)-[N-acetyl-beta-D-glucosaminyl-(1-&gt;6)]-N-acetyl-alpha-D-galactosaminyl}-L-threonyl-[protein] + UDP + H(+)</text>
        <dbReference type="Rhea" id="RHEA:56216"/>
        <dbReference type="Rhea" id="RHEA-COMP:13923"/>
        <dbReference type="Rhea" id="RHEA-COMP:14420"/>
        <dbReference type="ChEBI" id="CHEBI:15378"/>
        <dbReference type="ChEBI" id="CHEBI:57705"/>
        <dbReference type="ChEBI" id="CHEBI:58223"/>
        <dbReference type="ChEBI" id="CHEBI:137950"/>
        <dbReference type="ChEBI" id="CHEBI:139607"/>
        <dbReference type="EC" id="2.4.1.102"/>
    </reaction>
</comment>
<comment type="catalytic activity">
    <reaction evidence="2">
        <text>a beta-D-Gal-(1-&gt;4)-beta-D-GlcNAc-(1-&gt;3)-beta-D-Gal-(1-&gt;4)-beta-D-GlcNAc derivative + UDP-N-acetyl-alpha-D-glucosamine = a beta-D-Gal-(1-&gt;4)-beta-D-GlcNAc-(1-&gt;3)-[beta-D-GlcNAc-(1-&gt;6)]-beta-D-Gal-(1-&gt;4)-N-acetyl-beta-D-glucosaminyl derivative + UDP + H(+)</text>
        <dbReference type="Rhea" id="RHEA:54820"/>
        <dbReference type="ChEBI" id="CHEBI:15378"/>
        <dbReference type="ChEBI" id="CHEBI:57705"/>
        <dbReference type="ChEBI" id="CHEBI:58223"/>
        <dbReference type="ChEBI" id="CHEBI:138371"/>
        <dbReference type="ChEBI" id="CHEBI:138372"/>
        <dbReference type="EC" id="2.4.1.150"/>
    </reaction>
</comment>
<comment type="catalytic activity">
    <reaction evidence="2">
        <text>3-O-[N-acetyl-beta-D-glucosaminyl-(1-&gt;3)-N-acetyl-alpha-D-galactosaminyl]-L-seryl-[protein] + UDP-N-acetyl-alpha-D-glucosamine = 3-O-[N-acetyl-beta-D-glucosaminyl-(1-&gt;3)-[N-acetyl-beta-D-glucosaminyl-(1-&gt;6)]-N-acetyl-alpha-D-galactosaminyl]-L-seryl-[protein] + UDP + H(+)</text>
        <dbReference type="Rhea" id="RHEA:56188"/>
        <dbReference type="Rhea" id="RHEA-COMP:11691"/>
        <dbReference type="Rhea" id="RHEA-COMP:14412"/>
        <dbReference type="ChEBI" id="CHEBI:15378"/>
        <dbReference type="ChEBI" id="CHEBI:57705"/>
        <dbReference type="ChEBI" id="CHEBI:58223"/>
        <dbReference type="ChEBI" id="CHEBI:87079"/>
        <dbReference type="ChEBI" id="CHEBI:139581"/>
        <dbReference type="EC" id="2.4.1.148"/>
    </reaction>
</comment>
<comment type="catalytic activity">
    <reaction evidence="2">
        <text>a 3-O-[N-acetyl-beta-D-glucosaminyl-(1-&gt;3)-N-acetyl-alpha-D-galactosaminyl]-L-threonyl-[protein] + UDP-N-acetyl-alpha-D-glucosamine = 3-O-[N-acetyl-beta-D-glucosaminyl-(1-&gt;3)-[N-acetyl-beta-D-glucosaminyl-(1-&gt;6)]-N-acetyl-alpha-D-galactosaminyl]-L-threonyl-[protein] + UDP + H(+)</text>
        <dbReference type="Rhea" id="RHEA:56192"/>
        <dbReference type="Rhea" id="RHEA-COMP:11692"/>
        <dbReference type="Rhea" id="RHEA-COMP:14413"/>
        <dbReference type="ChEBI" id="CHEBI:15378"/>
        <dbReference type="ChEBI" id="CHEBI:57705"/>
        <dbReference type="ChEBI" id="CHEBI:58223"/>
        <dbReference type="ChEBI" id="CHEBI:87080"/>
        <dbReference type="ChEBI" id="CHEBI:139580"/>
        <dbReference type="EC" id="2.4.1.148"/>
    </reaction>
</comment>
<comment type="biophysicochemical properties">
    <phDependence>
        <text evidence="4">Optimum pH is 7-8.5.</text>
    </phDependence>
</comment>
<comment type="pathway">
    <text>Protein modification; protein glycosylation.</text>
</comment>
<comment type="subcellular location">
    <subcellularLocation>
        <location evidence="1">Golgi apparatus membrane</location>
        <topology evidence="1">Single-pass type II membrane protein</topology>
    </subcellularLocation>
</comment>
<comment type="PTM">
    <text evidence="1">N-glycosylated.</text>
</comment>
<comment type="similarity">
    <text evidence="5">Belongs to the glycosyltransferase 14 family.</text>
</comment>
<evidence type="ECO:0000250" key="1"/>
<evidence type="ECO:0000250" key="2">
    <source>
        <dbReference type="UniProtKB" id="O95395"/>
    </source>
</evidence>
<evidence type="ECO:0000255" key="3"/>
<evidence type="ECO:0000269" key="4">
    <source>
    </source>
</evidence>
<evidence type="ECO:0000305" key="5"/>
<organism>
    <name type="scientific">Rattus norvegicus</name>
    <name type="common">Rat</name>
    <dbReference type="NCBI Taxonomy" id="10116"/>
    <lineage>
        <taxon>Eukaryota</taxon>
        <taxon>Metazoa</taxon>
        <taxon>Chordata</taxon>
        <taxon>Craniata</taxon>
        <taxon>Vertebrata</taxon>
        <taxon>Euteleostomi</taxon>
        <taxon>Mammalia</taxon>
        <taxon>Eutheria</taxon>
        <taxon>Euarchontoglires</taxon>
        <taxon>Glires</taxon>
        <taxon>Rodentia</taxon>
        <taxon>Myomorpha</taxon>
        <taxon>Muroidea</taxon>
        <taxon>Muridae</taxon>
        <taxon>Murinae</taxon>
        <taxon>Rattus</taxon>
    </lineage>
</organism>
<dbReference type="EC" id="2.4.1.102" evidence="2"/>
<dbReference type="EC" id="2.4.1.148" evidence="2"/>
<dbReference type="EC" id="2.4.1.150" evidence="2"/>
<dbReference type="EMBL" id="AB098520">
    <property type="protein sequence ID" value="BAC53607.1"/>
    <property type="molecule type" value="mRNA"/>
</dbReference>
<dbReference type="RefSeq" id="NP_001419979.1">
    <property type="nucleotide sequence ID" value="NM_001433050.1"/>
</dbReference>
<dbReference type="RefSeq" id="NP_775434.1">
    <property type="nucleotide sequence ID" value="NM_173312.3"/>
</dbReference>
<dbReference type="RefSeq" id="XP_006243428.1">
    <property type="nucleotide sequence ID" value="XM_006243366.3"/>
</dbReference>
<dbReference type="RefSeq" id="XP_008764442.1">
    <property type="nucleotide sequence ID" value="XM_008766220.2"/>
</dbReference>
<dbReference type="RefSeq" id="XP_017450987.1">
    <property type="nucleotide sequence ID" value="XM_017595498.1"/>
</dbReference>
<dbReference type="RefSeq" id="XP_017450988.1">
    <property type="nucleotide sequence ID" value="XM_017595499.1"/>
</dbReference>
<dbReference type="SMR" id="Q8CH87"/>
<dbReference type="FunCoup" id="Q8CH87">
    <property type="interactions" value="29"/>
</dbReference>
<dbReference type="STRING" id="10116.ENSRNOP00000071784"/>
<dbReference type="CAZy" id="GT14">
    <property type="family name" value="Glycosyltransferase Family 14"/>
</dbReference>
<dbReference type="GlyCosmos" id="Q8CH87">
    <property type="glycosylation" value="1 site, No reported glycans"/>
</dbReference>
<dbReference type="GlyGen" id="Q8CH87">
    <property type="glycosylation" value="1 site"/>
</dbReference>
<dbReference type="PhosphoSitePlus" id="Q8CH87"/>
<dbReference type="PaxDb" id="10116-ENSRNOP00000014727"/>
<dbReference type="Ensembl" id="ENSRNOT00000079815.2">
    <property type="protein sequence ID" value="ENSRNOP00000071784.1"/>
    <property type="gene ID" value="ENSRNOG00000059540.2"/>
</dbReference>
<dbReference type="Ensembl" id="ENSRNOT00000104989.1">
    <property type="protein sequence ID" value="ENSRNOP00000094498.1"/>
    <property type="gene ID" value="ENSRNOG00000059540.2"/>
</dbReference>
<dbReference type="Ensembl" id="ENSRNOT00000106219.1">
    <property type="protein sequence ID" value="ENSRNOP00000093903.1"/>
    <property type="gene ID" value="ENSRNOG00000059540.2"/>
</dbReference>
<dbReference type="Ensembl" id="ENSRNOT00000109431.1">
    <property type="protein sequence ID" value="ENSRNOP00000096892.1"/>
    <property type="gene ID" value="ENSRNOG00000059540.2"/>
</dbReference>
<dbReference type="Ensembl" id="ENSRNOT00000112837.1">
    <property type="protein sequence ID" value="ENSRNOP00000081773.1"/>
    <property type="gene ID" value="ENSRNOG00000059540.2"/>
</dbReference>
<dbReference type="GeneID" id="286976"/>
<dbReference type="KEGG" id="rno:286976"/>
<dbReference type="UCSC" id="RGD:631333">
    <property type="organism name" value="rat"/>
</dbReference>
<dbReference type="AGR" id="RGD:631333"/>
<dbReference type="CTD" id="9245"/>
<dbReference type="RGD" id="631333">
    <property type="gene designation" value="Gcnt3"/>
</dbReference>
<dbReference type="eggNOG" id="KOG0799">
    <property type="taxonomic scope" value="Eukaryota"/>
</dbReference>
<dbReference type="GeneTree" id="ENSGT00940000159331"/>
<dbReference type="HOGENOM" id="CLU_032341_1_2_1"/>
<dbReference type="InParanoid" id="Q8CH87"/>
<dbReference type="OMA" id="NMTRDCE"/>
<dbReference type="OrthoDB" id="2019572at2759"/>
<dbReference type="PhylomeDB" id="Q8CH87"/>
<dbReference type="TreeFam" id="TF315534"/>
<dbReference type="BRENDA" id="2.4.1.150">
    <property type="organism ID" value="5301"/>
</dbReference>
<dbReference type="Reactome" id="R-RNO-913709">
    <property type="pathway name" value="O-linked glycosylation of mucins"/>
</dbReference>
<dbReference type="UniPathway" id="UPA00378"/>
<dbReference type="PRO" id="PR:Q8CH87"/>
<dbReference type="Proteomes" id="UP000002494">
    <property type="component" value="Chromosome 8"/>
</dbReference>
<dbReference type="Bgee" id="ENSRNOG00000059540">
    <property type="expression patterns" value="Expressed in stomach and 10 other cell types or tissues"/>
</dbReference>
<dbReference type="GO" id="GO:0000139">
    <property type="term" value="C:Golgi membrane"/>
    <property type="evidence" value="ECO:0007669"/>
    <property type="project" value="UniProtKB-SubCell"/>
</dbReference>
<dbReference type="GO" id="GO:0047225">
    <property type="term" value="F:acetylgalactosaminyl-O-glycosyl-glycoprotein beta-1,6-N-acetylglucosaminyltransferase activity"/>
    <property type="evidence" value="ECO:0000266"/>
    <property type="project" value="RGD"/>
</dbReference>
<dbReference type="GO" id="GO:0008375">
    <property type="term" value="F:acetylglucosaminyltransferase activity"/>
    <property type="evidence" value="ECO:0000318"/>
    <property type="project" value="GO_Central"/>
</dbReference>
<dbReference type="GO" id="GO:0003829">
    <property type="term" value="F:beta-1,3-galactosyl-O-glycosyl-glycoprotein beta-1,6-N-acetylglucosaminyltransferase activity"/>
    <property type="evidence" value="ECO:0007669"/>
    <property type="project" value="UniProtKB-EC"/>
</dbReference>
<dbReference type="GO" id="GO:0008109">
    <property type="term" value="F:N-acetyllactosaminide beta-1,6-N-acetylglucosaminyltransferase activity"/>
    <property type="evidence" value="ECO:0000314"/>
    <property type="project" value="RGD"/>
</dbReference>
<dbReference type="GO" id="GO:0050892">
    <property type="term" value="P:intestinal absorption"/>
    <property type="evidence" value="ECO:0000266"/>
    <property type="project" value="RGD"/>
</dbReference>
<dbReference type="GO" id="GO:0060993">
    <property type="term" value="P:kidney morphogenesis"/>
    <property type="evidence" value="ECO:0000266"/>
    <property type="project" value="RGD"/>
</dbReference>
<dbReference type="GO" id="GO:0006486">
    <property type="term" value="P:protein glycosylation"/>
    <property type="evidence" value="ECO:0007669"/>
    <property type="project" value="UniProtKB-UniPathway"/>
</dbReference>
<dbReference type="GO" id="GO:0048729">
    <property type="term" value="P:tissue morphogenesis"/>
    <property type="evidence" value="ECO:0000266"/>
    <property type="project" value="RGD"/>
</dbReference>
<dbReference type="InterPro" id="IPR003406">
    <property type="entry name" value="Glyco_trans_14"/>
</dbReference>
<dbReference type="PANTHER" id="PTHR19297:SF81">
    <property type="entry name" value="BETA-1,3-GALACTOSYL-O-GLYCOSYL-GLYCOPROTEIN BETA-1,6-N-ACETYLGLUCOSAMINYLTRANSFERASE 3"/>
    <property type="match status" value="1"/>
</dbReference>
<dbReference type="PANTHER" id="PTHR19297">
    <property type="entry name" value="GLYCOSYLTRANSFERASE 14 FAMILY MEMBER"/>
    <property type="match status" value="1"/>
</dbReference>
<dbReference type="Pfam" id="PF02485">
    <property type="entry name" value="Branch"/>
    <property type="match status" value="1"/>
</dbReference>
<feature type="chain" id="PRO_0000288547" description="Beta-1,3-galactosyl-O-glycosyl-glycoprotein beta-1,6-N-acetylglucosaminyltransferase 3">
    <location>
        <begin position="1"/>
        <end position="437"/>
    </location>
</feature>
<feature type="topological domain" description="Cytoplasmic" evidence="3">
    <location>
        <begin position="1"/>
        <end position="6"/>
    </location>
</feature>
<feature type="transmembrane region" description="Helical; Signal-anchor for type II membrane protein" evidence="3">
    <location>
        <begin position="7"/>
        <end position="27"/>
    </location>
</feature>
<feature type="topological domain" description="Lumenal" evidence="3">
    <location>
        <begin position="28"/>
        <end position="437"/>
    </location>
</feature>
<feature type="glycosylation site" description="N-linked (GlcNAc...) asparagine" evidence="3">
    <location>
        <position position="288"/>
    </location>
</feature>
<feature type="disulfide bond" evidence="1">
    <location>
        <begin position="70"/>
        <end position="227"/>
    </location>
</feature>
<feature type="disulfide bond" evidence="1">
    <location>
        <begin position="161"/>
        <end position="381"/>
    </location>
</feature>
<feature type="disulfide bond" evidence="1">
    <location>
        <begin position="182"/>
        <end position="209"/>
    </location>
</feature>
<feature type="disulfide bond" evidence="1">
    <location>
        <begin position="390"/>
        <end position="422"/>
    </location>
</feature>
<keyword id="KW-0903">Direct protein sequencing</keyword>
<keyword id="KW-1015">Disulfide bond</keyword>
<keyword id="KW-0325">Glycoprotein</keyword>
<keyword id="KW-0328">Glycosyltransferase</keyword>
<keyword id="KW-0333">Golgi apparatus</keyword>
<keyword id="KW-0472">Membrane</keyword>
<keyword id="KW-1185">Reference proteome</keyword>
<keyword id="KW-0735">Signal-anchor</keyword>
<keyword id="KW-0808">Transferase</keyword>
<keyword id="KW-0812">Transmembrane</keyword>
<keyword id="KW-1133">Transmembrane helix</keyword>